<protein>
    <recommendedName>
        <fullName evidence="1">Transcriptional repressor NrdR</fullName>
    </recommendedName>
</protein>
<dbReference type="EMBL" id="CP000853">
    <property type="protein sequence ID" value="ABW18934.1"/>
    <property type="molecule type" value="Genomic_DNA"/>
</dbReference>
<dbReference type="RefSeq" id="WP_012159246.1">
    <property type="nucleotide sequence ID" value="NC_009922.1"/>
</dbReference>
<dbReference type="SMR" id="A8MH47"/>
<dbReference type="STRING" id="350688.Clos_1390"/>
<dbReference type="KEGG" id="aoe:Clos_1390"/>
<dbReference type="eggNOG" id="COG1327">
    <property type="taxonomic scope" value="Bacteria"/>
</dbReference>
<dbReference type="HOGENOM" id="CLU_108412_0_0_9"/>
<dbReference type="OrthoDB" id="9807461at2"/>
<dbReference type="Proteomes" id="UP000000269">
    <property type="component" value="Chromosome"/>
</dbReference>
<dbReference type="GO" id="GO:0005524">
    <property type="term" value="F:ATP binding"/>
    <property type="evidence" value="ECO:0007669"/>
    <property type="project" value="UniProtKB-KW"/>
</dbReference>
<dbReference type="GO" id="GO:0003677">
    <property type="term" value="F:DNA binding"/>
    <property type="evidence" value="ECO:0007669"/>
    <property type="project" value="UniProtKB-KW"/>
</dbReference>
<dbReference type="GO" id="GO:0008270">
    <property type="term" value="F:zinc ion binding"/>
    <property type="evidence" value="ECO:0007669"/>
    <property type="project" value="UniProtKB-UniRule"/>
</dbReference>
<dbReference type="GO" id="GO:0045892">
    <property type="term" value="P:negative regulation of DNA-templated transcription"/>
    <property type="evidence" value="ECO:0007669"/>
    <property type="project" value="UniProtKB-UniRule"/>
</dbReference>
<dbReference type="HAMAP" id="MF_00440">
    <property type="entry name" value="NrdR"/>
    <property type="match status" value="1"/>
</dbReference>
<dbReference type="InterPro" id="IPR005144">
    <property type="entry name" value="ATP-cone_dom"/>
</dbReference>
<dbReference type="InterPro" id="IPR055173">
    <property type="entry name" value="NrdR-like_N"/>
</dbReference>
<dbReference type="InterPro" id="IPR003796">
    <property type="entry name" value="RNR_NrdR-like"/>
</dbReference>
<dbReference type="NCBIfam" id="TIGR00244">
    <property type="entry name" value="transcriptional regulator NrdR"/>
    <property type="match status" value="1"/>
</dbReference>
<dbReference type="PANTHER" id="PTHR30455">
    <property type="entry name" value="TRANSCRIPTIONAL REPRESSOR NRDR"/>
    <property type="match status" value="1"/>
</dbReference>
<dbReference type="PANTHER" id="PTHR30455:SF2">
    <property type="entry name" value="TRANSCRIPTIONAL REPRESSOR NRDR"/>
    <property type="match status" value="1"/>
</dbReference>
<dbReference type="Pfam" id="PF03477">
    <property type="entry name" value="ATP-cone"/>
    <property type="match status" value="1"/>
</dbReference>
<dbReference type="Pfam" id="PF22811">
    <property type="entry name" value="Zn_ribbon_NrdR"/>
    <property type="match status" value="1"/>
</dbReference>
<dbReference type="PROSITE" id="PS51161">
    <property type="entry name" value="ATP_CONE"/>
    <property type="match status" value="1"/>
</dbReference>
<organism>
    <name type="scientific">Alkaliphilus oremlandii (strain OhILAs)</name>
    <name type="common">Clostridium oremlandii (strain OhILAs)</name>
    <dbReference type="NCBI Taxonomy" id="350688"/>
    <lineage>
        <taxon>Bacteria</taxon>
        <taxon>Bacillati</taxon>
        <taxon>Bacillota</taxon>
        <taxon>Clostridia</taxon>
        <taxon>Peptostreptococcales</taxon>
        <taxon>Natronincolaceae</taxon>
        <taxon>Alkaliphilus</taxon>
    </lineage>
</organism>
<evidence type="ECO:0000255" key="1">
    <source>
        <dbReference type="HAMAP-Rule" id="MF_00440"/>
    </source>
</evidence>
<feature type="chain" id="PRO_1000080705" description="Transcriptional repressor NrdR">
    <location>
        <begin position="1"/>
        <end position="154"/>
    </location>
</feature>
<feature type="domain" description="ATP-cone" evidence="1">
    <location>
        <begin position="49"/>
        <end position="139"/>
    </location>
</feature>
<feature type="zinc finger region" evidence="1">
    <location>
        <begin position="3"/>
        <end position="34"/>
    </location>
</feature>
<name>NRDR_ALKOO</name>
<sequence>MNCPFCSHNDSKVIDSRPTDEGQAIRRRRECISCSKRFTTYEKIDEIPLIVVKKNGNREPYNRNKILNGVIRSCEKRPVSMKDIENLVDGIEKQIHNTMEREITTELIGNLVIDKIKDLDGVAYVRFASVYREFKDINTFMDEVKKILSEKPSL</sequence>
<comment type="function">
    <text evidence="1">Negatively regulates transcription of bacterial ribonucleotide reductase nrd genes and operons by binding to NrdR-boxes.</text>
</comment>
<comment type="cofactor">
    <cofactor evidence="1">
        <name>Zn(2+)</name>
        <dbReference type="ChEBI" id="CHEBI:29105"/>
    </cofactor>
    <text evidence="1">Binds 1 zinc ion.</text>
</comment>
<comment type="similarity">
    <text evidence="1">Belongs to the NrdR family.</text>
</comment>
<proteinExistence type="inferred from homology"/>
<reference key="1">
    <citation type="submission" date="2007-10" db="EMBL/GenBank/DDBJ databases">
        <title>Complete genome of Alkaliphilus oremlandii OhILAs.</title>
        <authorList>
            <person name="Copeland A."/>
            <person name="Lucas S."/>
            <person name="Lapidus A."/>
            <person name="Barry K."/>
            <person name="Detter J.C."/>
            <person name="Glavina del Rio T."/>
            <person name="Hammon N."/>
            <person name="Israni S."/>
            <person name="Dalin E."/>
            <person name="Tice H."/>
            <person name="Pitluck S."/>
            <person name="Chain P."/>
            <person name="Malfatti S."/>
            <person name="Shin M."/>
            <person name="Vergez L."/>
            <person name="Schmutz J."/>
            <person name="Larimer F."/>
            <person name="Land M."/>
            <person name="Hauser L."/>
            <person name="Kyrpides N."/>
            <person name="Mikhailova N."/>
            <person name="Stolz J.F."/>
            <person name="Dawson A."/>
            <person name="Fisher E."/>
            <person name="Crable B."/>
            <person name="Perera E."/>
            <person name="Lisak J."/>
            <person name="Ranganathan M."/>
            <person name="Basu P."/>
            <person name="Richardson P."/>
        </authorList>
    </citation>
    <scope>NUCLEOTIDE SEQUENCE [LARGE SCALE GENOMIC DNA]</scope>
    <source>
        <strain>OhILAs</strain>
    </source>
</reference>
<accession>A8MH47</accession>
<keyword id="KW-0067">ATP-binding</keyword>
<keyword id="KW-0238">DNA-binding</keyword>
<keyword id="KW-0479">Metal-binding</keyword>
<keyword id="KW-0547">Nucleotide-binding</keyword>
<keyword id="KW-1185">Reference proteome</keyword>
<keyword id="KW-0678">Repressor</keyword>
<keyword id="KW-0804">Transcription</keyword>
<keyword id="KW-0805">Transcription regulation</keyword>
<keyword id="KW-0862">Zinc</keyword>
<keyword id="KW-0863">Zinc-finger</keyword>
<gene>
    <name evidence="1" type="primary">nrdR</name>
    <name type="ordered locus">Clos_1390</name>
</gene>